<sequence length="145" mass="15401">MKGLLQRVRGARVEVAGEIVGAVDQGLLVLVAVEPSDTPESADKLLHKLLNYRVFSDDEGKMNLSLKDIDGGLLLVSQFTLAADTKSGLRPSFSTAAPPALGAALFDHLLLQAQQLHGKVASGRFGADMQVHLVNDGPVTFLLQT</sequence>
<protein>
    <recommendedName>
        <fullName evidence="1">D-aminoacyl-tRNA deacylase</fullName>
        <shortName evidence="1">DTD</shortName>
        <ecNumber evidence="1">3.1.1.96</ecNumber>
    </recommendedName>
    <alternativeName>
        <fullName evidence="1">Gly-tRNA(Ala) deacylase</fullName>
    </alternativeName>
</protein>
<evidence type="ECO:0000255" key="1">
    <source>
        <dbReference type="HAMAP-Rule" id="MF_00518"/>
    </source>
</evidence>
<accession>C3K814</accession>
<organism>
    <name type="scientific">Pseudomonas fluorescens (strain SBW25)</name>
    <dbReference type="NCBI Taxonomy" id="216595"/>
    <lineage>
        <taxon>Bacteria</taxon>
        <taxon>Pseudomonadati</taxon>
        <taxon>Pseudomonadota</taxon>
        <taxon>Gammaproteobacteria</taxon>
        <taxon>Pseudomonadales</taxon>
        <taxon>Pseudomonadaceae</taxon>
        <taxon>Pseudomonas</taxon>
    </lineage>
</organism>
<keyword id="KW-0963">Cytoplasm</keyword>
<keyword id="KW-0378">Hydrolase</keyword>
<keyword id="KW-0694">RNA-binding</keyword>
<keyword id="KW-0820">tRNA-binding</keyword>
<name>DTD_PSEFS</name>
<proteinExistence type="inferred from homology"/>
<reference key="1">
    <citation type="journal article" date="2009" name="Genome Biol.">
        <title>Genomic and genetic analyses of diversity and plant interactions of Pseudomonas fluorescens.</title>
        <authorList>
            <person name="Silby M.W."/>
            <person name="Cerdeno-Tarraga A.M."/>
            <person name="Vernikos G.S."/>
            <person name="Giddens S.R."/>
            <person name="Jackson R.W."/>
            <person name="Preston G.M."/>
            <person name="Zhang X.-X."/>
            <person name="Moon C.D."/>
            <person name="Gehrig S.M."/>
            <person name="Godfrey S.A.C."/>
            <person name="Knight C.G."/>
            <person name="Malone J.G."/>
            <person name="Robinson Z."/>
            <person name="Spiers A.J."/>
            <person name="Harris S."/>
            <person name="Challis G.L."/>
            <person name="Yaxley A.M."/>
            <person name="Harris D."/>
            <person name="Seeger K."/>
            <person name="Murphy L."/>
            <person name="Rutter S."/>
            <person name="Squares R."/>
            <person name="Quail M.A."/>
            <person name="Saunders E."/>
            <person name="Mavromatis K."/>
            <person name="Brettin T.S."/>
            <person name="Bentley S.D."/>
            <person name="Hothersall J."/>
            <person name="Stephens E."/>
            <person name="Thomas C.M."/>
            <person name="Parkhill J."/>
            <person name="Levy S.B."/>
            <person name="Rainey P.B."/>
            <person name="Thomson N.R."/>
        </authorList>
    </citation>
    <scope>NUCLEOTIDE SEQUENCE [LARGE SCALE GENOMIC DNA]</scope>
    <source>
        <strain>SBW25</strain>
    </source>
</reference>
<comment type="function">
    <text evidence="1">An aminoacyl-tRNA editing enzyme that deacylates mischarged D-aminoacyl-tRNAs. Also deacylates mischarged glycyl-tRNA(Ala), protecting cells against glycine mischarging by AlaRS. Acts via tRNA-based rather than protein-based catalysis; rejects L-amino acids rather than detecting D-amino acids in the active site. By recycling D-aminoacyl-tRNA to D-amino acids and free tRNA molecules, this enzyme counteracts the toxicity associated with the formation of D-aminoacyl-tRNA entities in vivo and helps enforce protein L-homochirality.</text>
</comment>
<comment type="catalytic activity">
    <reaction evidence="1">
        <text>glycyl-tRNA(Ala) + H2O = tRNA(Ala) + glycine + H(+)</text>
        <dbReference type="Rhea" id="RHEA:53744"/>
        <dbReference type="Rhea" id="RHEA-COMP:9657"/>
        <dbReference type="Rhea" id="RHEA-COMP:13640"/>
        <dbReference type="ChEBI" id="CHEBI:15377"/>
        <dbReference type="ChEBI" id="CHEBI:15378"/>
        <dbReference type="ChEBI" id="CHEBI:57305"/>
        <dbReference type="ChEBI" id="CHEBI:78442"/>
        <dbReference type="ChEBI" id="CHEBI:78522"/>
        <dbReference type="EC" id="3.1.1.96"/>
    </reaction>
</comment>
<comment type="catalytic activity">
    <reaction evidence="1">
        <text>a D-aminoacyl-tRNA + H2O = a tRNA + a D-alpha-amino acid + H(+)</text>
        <dbReference type="Rhea" id="RHEA:13953"/>
        <dbReference type="Rhea" id="RHEA-COMP:10123"/>
        <dbReference type="Rhea" id="RHEA-COMP:10124"/>
        <dbReference type="ChEBI" id="CHEBI:15377"/>
        <dbReference type="ChEBI" id="CHEBI:15378"/>
        <dbReference type="ChEBI" id="CHEBI:59871"/>
        <dbReference type="ChEBI" id="CHEBI:78442"/>
        <dbReference type="ChEBI" id="CHEBI:79333"/>
        <dbReference type="EC" id="3.1.1.96"/>
    </reaction>
</comment>
<comment type="subunit">
    <text evidence="1">Homodimer.</text>
</comment>
<comment type="subcellular location">
    <subcellularLocation>
        <location evidence="1">Cytoplasm</location>
    </subcellularLocation>
</comment>
<comment type="domain">
    <text evidence="1">A Gly-cisPro motif from one monomer fits into the active site of the other monomer to allow specific chiral rejection of L-amino acids.</text>
</comment>
<comment type="similarity">
    <text evidence="1">Belongs to the DTD family.</text>
</comment>
<feature type="chain" id="PRO_1000211736" description="D-aminoacyl-tRNA deacylase">
    <location>
        <begin position="1"/>
        <end position="145"/>
    </location>
</feature>
<feature type="short sequence motif" description="Gly-cisPro motif, important for rejection of L-amino acids" evidence="1">
    <location>
        <begin position="137"/>
        <end position="138"/>
    </location>
</feature>
<gene>
    <name evidence="1" type="primary">dtd</name>
    <name type="ordered locus">PFLU_0372</name>
</gene>
<dbReference type="EC" id="3.1.1.96" evidence="1"/>
<dbReference type="EMBL" id="AM181176">
    <property type="protein sequence ID" value="CAY46649.1"/>
    <property type="molecule type" value="Genomic_DNA"/>
</dbReference>
<dbReference type="RefSeq" id="WP_012721783.1">
    <property type="nucleotide sequence ID" value="NC_012660.1"/>
</dbReference>
<dbReference type="SMR" id="C3K814"/>
<dbReference type="STRING" id="294.SRM1_00422"/>
<dbReference type="GeneID" id="93461972"/>
<dbReference type="PATRIC" id="fig|216595.4.peg.607"/>
<dbReference type="eggNOG" id="COG1490">
    <property type="taxonomic scope" value="Bacteria"/>
</dbReference>
<dbReference type="HOGENOM" id="CLU_076901_1_1_6"/>
<dbReference type="OrthoDB" id="9801395at2"/>
<dbReference type="GO" id="GO:0005737">
    <property type="term" value="C:cytoplasm"/>
    <property type="evidence" value="ECO:0007669"/>
    <property type="project" value="UniProtKB-SubCell"/>
</dbReference>
<dbReference type="GO" id="GO:0051500">
    <property type="term" value="F:D-tyrosyl-tRNA(Tyr) deacylase activity"/>
    <property type="evidence" value="ECO:0007669"/>
    <property type="project" value="TreeGrafter"/>
</dbReference>
<dbReference type="GO" id="GO:0106026">
    <property type="term" value="F:Gly-tRNA(Ala) deacylase activity"/>
    <property type="evidence" value="ECO:0007669"/>
    <property type="project" value="UniProtKB-UniRule"/>
</dbReference>
<dbReference type="GO" id="GO:0043908">
    <property type="term" value="F:Ser(Gly)-tRNA(Ala) hydrolase activity"/>
    <property type="evidence" value="ECO:0007669"/>
    <property type="project" value="UniProtKB-UniRule"/>
</dbReference>
<dbReference type="GO" id="GO:0000049">
    <property type="term" value="F:tRNA binding"/>
    <property type="evidence" value="ECO:0007669"/>
    <property type="project" value="UniProtKB-UniRule"/>
</dbReference>
<dbReference type="GO" id="GO:0019478">
    <property type="term" value="P:D-amino acid catabolic process"/>
    <property type="evidence" value="ECO:0007669"/>
    <property type="project" value="UniProtKB-UniRule"/>
</dbReference>
<dbReference type="FunFam" id="3.50.80.10:FF:000001">
    <property type="entry name" value="D-aminoacyl-tRNA deacylase"/>
    <property type="match status" value="1"/>
</dbReference>
<dbReference type="Gene3D" id="3.50.80.10">
    <property type="entry name" value="D-tyrosyl-tRNA(Tyr) deacylase"/>
    <property type="match status" value="1"/>
</dbReference>
<dbReference type="HAMAP" id="MF_00518">
    <property type="entry name" value="Deacylase_Dtd"/>
    <property type="match status" value="1"/>
</dbReference>
<dbReference type="InterPro" id="IPR003732">
    <property type="entry name" value="Daa-tRNA_deacyls_DTD"/>
</dbReference>
<dbReference type="InterPro" id="IPR023509">
    <property type="entry name" value="DTD-like_sf"/>
</dbReference>
<dbReference type="NCBIfam" id="TIGR00256">
    <property type="entry name" value="D-aminoacyl-tRNA deacylase"/>
    <property type="match status" value="1"/>
</dbReference>
<dbReference type="PANTHER" id="PTHR10472:SF5">
    <property type="entry name" value="D-AMINOACYL-TRNA DEACYLASE 1"/>
    <property type="match status" value="1"/>
</dbReference>
<dbReference type="PANTHER" id="PTHR10472">
    <property type="entry name" value="D-TYROSYL-TRNA TYR DEACYLASE"/>
    <property type="match status" value="1"/>
</dbReference>
<dbReference type="Pfam" id="PF02580">
    <property type="entry name" value="Tyr_Deacylase"/>
    <property type="match status" value="1"/>
</dbReference>
<dbReference type="SUPFAM" id="SSF69500">
    <property type="entry name" value="DTD-like"/>
    <property type="match status" value="1"/>
</dbReference>